<comment type="catalytic activity">
    <reaction evidence="1">
        <text>beta-D-fructose 1,6-bisphosphate + H2O = beta-D-fructose 6-phosphate + phosphate</text>
        <dbReference type="Rhea" id="RHEA:11064"/>
        <dbReference type="ChEBI" id="CHEBI:15377"/>
        <dbReference type="ChEBI" id="CHEBI:32966"/>
        <dbReference type="ChEBI" id="CHEBI:43474"/>
        <dbReference type="ChEBI" id="CHEBI:57634"/>
        <dbReference type="EC" id="3.1.3.11"/>
    </reaction>
</comment>
<comment type="cofactor">
    <cofactor evidence="1">
        <name>Mn(2+)</name>
        <dbReference type="ChEBI" id="CHEBI:29035"/>
    </cofactor>
</comment>
<comment type="pathway">
    <text evidence="1">Carbohydrate biosynthesis; gluconeogenesis.</text>
</comment>
<comment type="similarity">
    <text evidence="1">Belongs to the FBPase class 3 family.</text>
</comment>
<reference key="1">
    <citation type="journal article" date="2008" name="PLoS Genet.">
        <title>Complete genome sequence of the complex carbohydrate-degrading marine bacterium, Saccharophagus degradans strain 2-40 T.</title>
        <authorList>
            <person name="Weiner R.M."/>
            <person name="Taylor L.E. II"/>
            <person name="Henrissat B."/>
            <person name="Hauser L."/>
            <person name="Land M."/>
            <person name="Coutinho P.M."/>
            <person name="Rancurel C."/>
            <person name="Saunders E.H."/>
            <person name="Longmire A.G."/>
            <person name="Zhang H."/>
            <person name="Bayer E.A."/>
            <person name="Gilbert H.J."/>
            <person name="Larimer F."/>
            <person name="Zhulin I.B."/>
            <person name="Ekborg N.A."/>
            <person name="Lamed R."/>
            <person name="Richardson P.M."/>
            <person name="Borovok I."/>
            <person name="Hutcheson S."/>
        </authorList>
    </citation>
    <scope>NUCLEOTIDE SEQUENCE [LARGE SCALE GENOMIC DNA]</scope>
    <source>
        <strain>2-40 / ATCC 43961 / DSM 17024</strain>
    </source>
</reference>
<keyword id="KW-0119">Carbohydrate metabolism</keyword>
<keyword id="KW-0378">Hydrolase</keyword>
<keyword id="KW-0464">Manganese</keyword>
<keyword id="KW-1185">Reference proteome</keyword>
<proteinExistence type="inferred from homology"/>
<sequence length="582" mass="65585">MTSNALKVFISDLHGELDVFDFLADRQFGILHLLIRQQFSPELNETLCAAIEASAIRLCRAANASQAQLDRTSAVSKEILFTALFLMVVQQKAEDESLTIAIRRWGWLSTVHRALSGDAQLSCTPFSQLVEMLAQNIRTLSAQDFFALVQAFAKALFKKLSPELNIVGDIYDRGQDAFAIMERLRGLPNVAIQWGNHDVVWMGAASGNLACITVAVRICLRYGTLDMLHRDYGINLSRLERFAAKAYGDDDCAQFTPKGDLNAEEKLRIARMHKAISIIQFKLEGKLIARRPEYTMADRLLLDKINIANSTVTVGDAVHPLLDSNFPTLDVEQPYRLSEDERKVAEDLKQQFLASAKLTQHMDILFHRGGMQKKTGDWLLYHACVPVDEQGEFQPFALAPETTRGQSLFNFCELEMRRGYLNRMVINDRNESDIAWFLWCGPHSPLFGKARMTTFERYFVADKQTHKEGKNEYYNLRSNPEFLARVATELKCSSDQVRIVNGHVPVKYQSGERPVQANGKLFSIDGGFSMPYRSATGLAGFVLLEALGQIVLYRVIPNDKRYALEVEYQQILKPKAASVPAA</sequence>
<dbReference type="EC" id="3.1.3.11" evidence="1"/>
<dbReference type="EMBL" id="CP000282">
    <property type="protein sequence ID" value="ABD82533.1"/>
    <property type="molecule type" value="Genomic_DNA"/>
</dbReference>
<dbReference type="RefSeq" id="WP_011469749.1">
    <property type="nucleotide sequence ID" value="NC_007912.1"/>
</dbReference>
<dbReference type="STRING" id="203122.Sde_3278"/>
<dbReference type="GeneID" id="98614899"/>
<dbReference type="KEGG" id="sde:Sde_3278"/>
<dbReference type="eggNOG" id="COG3855">
    <property type="taxonomic scope" value="Bacteria"/>
</dbReference>
<dbReference type="HOGENOM" id="CLU_028392_2_0_6"/>
<dbReference type="OrthoDB" id="9779903at2"/>
<dbReference type="UniPathway" id="UPA00138"/>
<dbReference type="Proteomes" id="UP000001947">
    <property type="component" value="Chromosome"/>
</dbReference>
<dbReference type="GO" id="GO:0042132">
    <property type="term" value="F:fructose 1,6-bisphosphate 1-phosphatase activity"/>
    <property type="evidence" value="ECO:0007669"/>
    <property type="project" value="UniProtKB-UniRule"/>
</dbReference>
<dbReference type="GO" id="GO:0006094">
    <property type="term" value="P:gluconeogenesis"/>
    <property type="evidence" value="ECO:0007669"/>
    <property type="project" value="UniProtKB-UniRule"/>
</dbReference>
<dbReference type="Gene3D" id="3.60.21.10">
    <property type="match status" value="1"/>
</dbReference>
<dbReference type="HAMAP" id="MF_01854">
    <property type="entry name" value="FBPase_class3"/>
    <property type="match status" value="1"/>
</dbReference>
<dbReference type="InterPro" id="IPR009164">
    <property type="entry name" value="FBPtase_class3"/>
</dbReference>
<dbReference type="InterPro" id="IPR029052">
    <property type="entry name" value="Metallo-depent_PP-like"/>
</dbReference>
<dbReference type="Pfam" id="PF06874">
    <property type="entry name" value="FBPase_2"/>
    <property type="match status" value="1"/>
</dbReference>
<dbReference type="SUPFAM" id="SSF56300">
    <property type="entry name" value="Metallo-dependent phosphatases"/>
    <property type="match status" value="1"/>
</dbReference>
<evidence type="ECO:0000255" key="1">
    <source>
        <dbReference type="HAMAP-Rule" id="MF_01854"/>
    </source>
</evidence>
<protein>
    <recommendedName>
        <fullName evidence="1">Fructose-1,6-bisphosphatase class 3</fullName>
        <shortName evidence="1">FBPase class 3</shortName>
        <ecNumber evidence="1">3.1.3.11</ecNumber>
    </recommendedName>
    <alternativeName>
        <fullName evidence="1">D-fructose-1,6-bisphosphate 1-phosphohydrolase class 3</fullName>
    </alternativeName>
</protein>
<feature type="chain" id="PRO_0000363109" description="Fructose-1,6-bisphosphatase class 3">
    <location>
        <begin position="1"/>
        <end position="582"/>
    </location>
</feature>
<gene>
    <name evidence="1" type="primary">fbp</name>
    <name type="ordered locus">Sde_3278</name>
</gene>
<accession>Q21FJ6</accession>
<name>F16PC_SACD2</name>
<organism>
    <name type="scientific">Saccharophagus degradans (strain 2-40 / ATCC 43961 / DSM 17024)</name>
    <dbReference type="NCBI Taxonomy" id="203122"/>
    <lineage>
        <taxon>Bacteria</taxon>
        <taxon>Pseudomonadati</taxon>
        <taxon>Pseudomonadota</taxon>
        <taxon>Gammaproteobacteria</taxon>
        <taxon>Cellvibrionales</taxon>
        <taxon>Cellvibrionaceae</taxon>
        <taxon>Saccharophagus</taxon>
    </lineage>
</organism>